<reference key="1">
    <citation type="journal article" date="2005" name="Science">
        <title>The genome of the basidiomycetous yeast and human pathogen Cryptococcus neoformans.</title>
        <authorList>
            <person name="Loftus B.J."/>
            <person name="Fung E."/>
            <person name="Roncaglia P."/>
            <person name="Rowley D."/>
            <person name="Amedeo P."/>
            <person name="Bruno D."/>
            <person name="Vamathevan J."/>
            <person name="Miranda M."/>
            <person name="Anderson I.J."/>
            <person name="Fraser J.A."/>
            <person name="Allen J.E."/>
            <person name="Bosdet I.E."/>
            <person name="Brent M.R."/>
            <person name="Chiu R."/>
            <person name="Doering T.L."/>
            <person name="Donlin M.J."/>
            <person name="D'Souza C.A."/>
            <person name="Fox D.S."/>
            <person name="Grinberg V."/>
            <person name="Fu J."/>
            <person name="Fukushima M."/>
            <person name="Haas B.J."/>
            <person name="Huang J.C."/>
            <person name="Janbon G."/>
            <person name="Jones S.J.M."/>
            <person name="Koo H.L."/>
            <person name="Krzywinski M.I."/>
            <person name="Kwon-Chung K.J."/>
            <person name="Lengeler K.B."/>
            <person name="Maiti R."/>
            <person name="Marra M.A."/>
            <person name="Marra R.E."/>
            <person name="Mathewson C.A."/>
            <person name="Mitchell T.G."/>
            <person name="Pertea M."/>
            <person name="Riggs F.R."/>
            <person name="Salzberg S.L."/>
            <person name="Schein J.E."/>
            <person name="Shvartsbeyn A."/>
            <person name="Shin H."/>
            <person name="Shumway M."/>
            <person name="Specht C.A."/>
            <person name="Suh B.B."/>
            <person name="Tenney A."/>
            <person name="Utterback T.R."/>
            <person name="Wickes B.L."/>
            <person name="Wortman J.R."/>
            <person name="Wye N.H."/>
            <person name="Kronstad J.W."/>
            <person name="Lodge J.K."/>
            <person name="Heitman J."/>
            <person name="Davis R.W."/>
            <person name="Fraser C.M."/>
            <person name="Hyman R.W."/>
        </authorList>
    </citation>
    <scope>NUCLEOTIDE SEQUENCE [LARGE SCALE GENOMIC DNA]</scope>
    <source>
        <strain>B-3501A</strain>
    </source>
</reference>
<evidence type="ECO:0000255" key="1">
    <source>
        <dbReference type="HAMAP-Rule" id="MF_03101"/>
    </source>
</evidence>
<name>DOHH_CRYNB</name>
<sequence length="361" mass="39306">MSVQVSPEQMATLKATLLNTPGNVPLHERFRALFMLKAVGGDEVVDIVSEGLKDPSPLLKHELAYVLGQLLNTRALPTLSRVLENPTGEHCSMVRHEAAEALGAIGAEESLPILRKYMQDENREVRETCEIAVGKIEFDLSEEGKKANANPDFPTIDPAPSAAPSDIPSLRADLLNTSLPLFQRYRAMFALRDFGAGSKEAVEALADGFRDGSALFRHEIAYIFGQLSSPYSIPSLLSRLRDAKEDDMVRHEAAEALGGIASDGVESENPEVVLPEDERLPEGGVLAVLREWAVKADAPTVVRESCQVAIDMWEYENSADQFNPLDSLSAKQEEREKTEKVNTTGMERSAHAAVAAMGIAA</sequence>
<proteinExistence type="inferred from homology"/>
<accession>P0CN11</accession>
<accession>Q55M65</accession>
<accession>Q5K8K5</accession>
<organism>
    <name type="scientific">Cryptococcus neoformans var. neoformans serotype D (strain B-3501A)</name>
    <name type="common">Filobasidiella neoformans</name>
    <dbReference type="NCBI Taxonomy" id="283643"/>
    <lineage>
        <taxon>Eukaryota</taxon>
        <taxon>Fungi</taxon>
        <taxon>Dikarya</taxon>
        <taxon>Basidiomycota</taxon>
        <taxon>Agaricomycotina</taxon>
        <taxon>Tremellomycetes</taxon>
        <taxon>Tremellales</taxon>
        <taxon>Cryptococcaceae</taxon>
        <taxon>Cryptococcus</taxon>
        <taxon>Cryptococcus neoformans species complex</taxon>
    </lineage>
</organism>
<keyword id="KW-0963">Cytoplasm</keyword>
<keyword id="KW-0386">Hypusine biosynthesis</keyword>
<keyword id="KW-0408">Iron</keyword>
<keyword id="KW-0479">Metal-binding</keyword>
<keyword id="KW-0503">Monooxygenase</keyword>
<keyword id="KW-0539">Nucleus</keyword>
<keyword id="KW-0560">Oxidoreductase</keyword>
<keyword id="KW-0677">Repeat</keyword>
<gene>
    <name evidence="1" type="primary">LIA1</name>
    <name type="ordered locus">CNBI1470</name>
</gene>
<dbReference type="EC" id="1.14.99.29" evidence="1"/>
<dbReference type="EMBL" id="AAEY01000044">
    <property type="protein sequence ID" value="EAL18886.1"/>
    <property type="molecule type" value="Genomic_DNA"/>
</dbReference>
<dbReference type="RefSeq" id="XP_773533.1">
    <property type="nucleotide sequence ID" value="XM_768440.1"/>
</dbReference>
<dbReference type="SMR" id="P0CN11"/>
<dbReference type="GeneID" id="4938106"/>
<dbReference type="KEGG" id="cnb:CNBI1470"/>
<dbReference type="VEuPathDB" id="FungiDB:CNBI1470"/>
<dbReference type="HOGENOM" id="CLU_053974_0_0_1"/>
<dbReference type="OrthoDB" id="6668at5206"/>
<dbReference type="UniPathway" id="UPA00354"/>
<dbReference type="GO" id="GO:0005737">
    <property type="term" value="C:cytoplasm"/>
    <property type="evidence" value="ECO:0007669"/>
    <property type="project" value="UniProtKB-SubCell"/>
</dbReference>
<dbReference type="GO" id="GO:0005634">
    <property type="term" value="C:nucleus"/>
    <property type="evidence" value="ECO:0007669"/>
    <property type="project" value="UniProtKB-SubCell"/>
</dbReference>
<dbReference type="GO" id="GO:0019135">
    <property type="term" value="F:deoxyhypusine monooxygenase activity"/>
    <property type="evidence" value="ECO:0007669"/>
    <property type="project" value="UniProtKB-UniRule"/>
</dbReference>
<dbReference type="GO" id="GO:0046872">
    <property type="term" value="F:metal ion binding"/>
    <property type="evidence" value="ECO:0007669"/>
    <property type="project" value="UniProtKB-KW"/>
</dbReference>
<dbReference type="Gene3D" id="1.25.10.10">
    <property type="entry name" value="Leucine-rich Repeat Variant"/>
    <property type="match status" value="2"/>
</dbReference>
<dbReference type="HAMAP" id="MF_03101">
    <property type="entry name" value="Deoxyhypusine_hydroxylase"/>
    <property type="match status" value="1"/>
</dbReference>
<dbReference type="InterPro" id="IPR011989">
    <property type="entry name" value="ARM-like"/>
</dbReference>
<dbReference type="InterPro" id="IPR016024">
    <property type="entry name" value="ARM-type_fold"/>
</dbReference>
<dbReference type="InterPro" id="IPR027517">
    <property type="entry name" value="Deoxyhypusine_hydroxylase"/>
</dbReference>
<dbReference type="InterPro" id="IPR004155">
    <property type="entry name" value="PBS_lyase_HEAT"/>
</dbReference>
<dbReference type="PANTHER" id="PTHR12697:SF5">
    <property type="entry name" value="DEOXYHYPUSINE HYDROXYLASE"/>
    <property type="match status" value="1"/>
</dbReference>
<dbReference type="PANTHER" id="PTHR12697">
    <property type="entry name" value="PBS LYASE HEAT-LIKE PROTEIN"/>
    <property type="match status" value="1"/>
</dbReference>
<dbReference type="Pfam" id="PF13646">
    <property type="entry name" value="HEAT_2"/>
    <property type="match status" value="2"/>
</dbReference>
<dbReference type="SMART" id="SM00567">
    <property type="entry name" value="EZ_HEAT"/>
    <property type="match status" value="6"/>
</dbReference>
<dbReference type="SUPFAM" id="SSF48371">
    <property type="entry name" value="ARM repeat"/>
    <property type="match status" value="1"/>
</dbReference>
<comment type="function">
    <text evidence="1">Catalyzes the hydroxylation of the N(6)-(4-aminobutyl)-L-lysine intermediate to form hypusine, an essential post-translational modification only found in mature eIF-5A factor.</text>
</comment>
<comment type="catalytic activity">
    <reaction evidence="1">
        <text>[eIF5A protein]-deoxyhypusine + AH2 + O2 = [eIF5A protein]-hypusine + A + H2O</text>
        <dbReference type="Rhea" id="RHEA:14101"/>
        <dbReference type="Rhea" id="RHEA-COMP:10144"/>
        <dbReference type="Rhea" id="RHEA-COMP:12592"/>
        <dbReference type="ChEBI" id="CHEBI:13193"/>
        <dbReference type="ChEBI" id="CHEBI:15377"/>
        <dbReference type="ChEBI" id="CHEBI:15379"/>
        <dbReference type="ChEBI" id="CHEBI:17499"/>
        <dbReference type="ChEBI" id="CHEBI:82657"/>
        <dbReference type="ChEBI" id="CHEBI:91175"/>
        <dbReference type="EC" id="1.14.99.29"/>
    </reaction>
</comment>
<comment type="cofactor">
    <cofactor evidence="1">
        <name>Fe(2+)</name>
        <dbReference type="ChEBI" id="CHEBI:29033"/>
    </cofactor>
    <text evidence="1">Binds 2 Fe(2+) ions per subunit.</text>
</comment>
<comment type="pathway">
    <text evidence="1">Protein modification; eIF5A hypusination.</text>
</comment>
<comment type="subcellular location">
    <subcellularLocation>
        <location evidence="1">Cytoplasm</location>
    </subcellularLocation>
    <subcellularLocation>
        <location evidence="1">Nucleus</location>
    </subcellularLocation>
</comment>
<comment type="similarity">
    <text evidence="1">Belongs to the deoxyhypusine hydroxylase family.</text>
</comment>
<protein>
    <recommendedName>
        <fullName evidence="1">Deoxyhypusine hydroxylase</fullName>
        <shortName evidence="1">DOHH</shortName>
        <ecNumber evidence="1">1.14.99.29</ecNumber>
    </recommendedName>
    <alternativeName>
        <fullName evidence="1">Deoxyhypusine dioxygenase</fullName>
    </alternativeName>
    <alternativeName>
        <fullName evidence="1">Deoxyhypusine monooxygenase</fullName>
    </alternativeName>
</protein>
<feature type="chain" id="PRO_0000410059" description="Deoxyhypusine hydroxylase">
    <location>
        <begin position="1"/>
        <end position="361"/>
    </location>
</feature>
<feature type="repeat" description="HEAT-like PBS-type 1">
    <location>
        <begin position="59"/>
        <end position="85"/>
    </location>
</feature>
<feature type="repeat" description="HEAT-like PBS-type 2">
    <location>
        <begin position="94"/>
        <end position="120"/>
    </location>
</feature>
<feature type="repeat" description="HEAT-like PBS-type 3">
    <location>
        <begin position="183"/>
        <end position="211"/>
    </location>
</feature>
<feature type="repeat" description="HEAT-like PBS-type 4">
    <location>
        <begin position="216"/>
        <end position="242"/>
    </location>
</feature>
<feature type="binding site" evidence="1">
    <location>
        <position position="61"/>
    </location>
    <ligand>
        <name>Fe cation</name>
        <dbReference type="ChEBI" id="CHEBI:24875"/>
        <label>1</label>
    </ligand>
</feature>
<feature type="binding site" evidence="1">
    <location>
        <position position="62"/>
    </location>
    <ligand>
        <name>Fe cation</name>
        <dbReference type="ChEBI" id="CHEBI:24875"/>
        <label>1</label>
    </ligand>
</feature>
<feature type="binding site" evidence="1">
    <location>
        <position position="96"/>
    </location>
    <ligand>
        <name>Fe cation</name>
        <dbReference type="ChEBI" id="CHEBI:24875"/>
        <label>1</label>
    </ligand>
</feature>
<feature type="binding site" evidence="1">
    <location>
        <position position="97"/>
    </location>
    <ligand>
        <name>Fe cation</name>
        <dbReference type="ChEBI" id="CHEBI:24875"/>
        <label>1</label>
    </ligand>
</feature>
<feature type="binding site" evidence="1">
    <location>
        <position position="218"/>
    </location>
    <ligand>
        <name>Fe cation</name>
        <dbReference type="ChEBI" id="CHEBI:24875"/>
        <label>2</label>
    </ligand>
</feature>
<feature type="binding site" evidence="1">
    <location>
        <position position="219"/>
    </location>
    <ligand>
        <name>Fe cation</name>
        <dbReference type="ChEBI" id="CHEBI:24875"/>
        <label>2</label>
    </ligand>
</feature>
<feature type="binding site" evidence="1">
    <location>
        <position position="251"/>
    </location>
    <ligand>
        <name>Fe cation</name>
        <dbReference type="ChEBI" id="CHEBI:24875"/>
        <label>2</label>
    </ligand>
</feature>
<feature type="binding site" evidence="1">
    <location>
        <position position="252"/>
    </location>
    <ligand>
        <name>Fe cation</name>
        <dbReference type="ChEBI" id="CHEBI:24875"/>
        <label>2</label>
    </ligand>
</feature>